<organism>
    <name type="scientific">Thermus thermophilus (strain ATCC BAA-163 / DSM 7039 / HB27)</name>
    <dbReference type="NCBI Taxonomy" id="262724"/>
    <lineage>
        <taxon>Bacteria</taxon>
        <taxon>Thermotogati</taxon>
        <taxon>Deinococcota</taxon>
        <taxon>Deinococci</taxon>
        <taxon>Thermales</taxon>
        <taxon>Thermaceae</taxon>
        <taxon>Thermus</taxon>
    </lineage>
</organism>
<feature type="chain" id="PRO_0000172272" description="S-ribosylhomocysteine lyase">
    <location>
        <begin position="1"/>
        <end position="155"/>
    </location>
</feature>
<feature type="binding site" evidence="1">
    <location>
        <position position="53"/>
    </location>
    <ligand>
        <name>Fe cation</name>
        <dbReference type="ChEBI" id="CHEBI:24875"/>
    </ligand>
</feature>
<feature type="binding site" evidence="1">
    <location>
        <position position="57"/>
    </location>
    <ligand>
        <name>Fe cation</name>
        <dbReference type="ChEBI" id="CHEBI:24875"/>
    </ligand>
</feature>
<feature type="binding site" evidence="1">
    <location>
        <position position="121"/>
    </location>
    <ligand>
        <name>Fe cation</name>
        <dbReference type="ChEBI" id="CHEBI:24875"/>
    </ligand>
</feature>
<accession>Q72IE6</accession>
<comment type="function">
    <text evidence="1">Involved in the synthesis of autoinducer 2 (AI-2) which is secreted by bacteria and is used to communicate both the cell density and the metabolic potential of the environment. The regulation of gene expression in response to changes in cell density is called quorum sensing. Catalyzes the transformation of S-ribosylhomocysteine (RHC) to homocysteine (HC) and 4,5-dihydroxy-2,3-pentadione (DPD).</text>
</comment>
<comment type="catalytic activity">
    <reaction evidence="1">
        <text>S-(5-deoxy-D-ribos-5-yl)-L-homocysteine = (S)-4,5-dihydroxypentane-2,3-dione + L-homocysteine</text>
        <dbReference type="Rhea" id="RHEA:17753"/>
        <dbReference type="ChEBI" id="CHEBI:29484"/>
        <dbReference type="ChEBI" id="CHEBI:58195"/>
        <dbReference type="ChEBI" id="CHEBI:58199"/>
        <dbReference type="EC" id="4.4.1.21"/>
    </reaction>
</comment>
<comment type="cofactor">
    <cofactor evidence="1">
        <name>Fe cation</name>
        <dbReference type="ChEBI" id="CHEBI:24875"/>
    </cofactor>
    <text evidence="1">Binds 1 Fe cation per subunit.</text>
</comment>
<comment type="subunit">
    <text evidence="1">Homodimer.</text>
</comment>
<comment type="similarity">
    <text evidence="1">Belongs to the LuxS family.</text>
</comment>
<gene>
    <name evidence="1" type="primary">luxS</name>
    <name type="ordered locus">TT_C1186</name>
</gene>
<sequence>MAEVESFSLDHTKVKAPYVRLAGRKALAGGVVEKYDLRLAQPNREALPTGALHTLEHLLAGYLRDHLPGVIDLSPMGCRTGFYLVVEGPVGEEKVLEAFAQALKDVLAHEGEVPGASFRECGNYRDHDLPGAKAWAEKVLKAGLRVQATVPLEAR</sequence>
<evidence type="ECO:0000255" key="1">
    <source>
        <dbReference type="HAMAP-Rule" id="MF_00091"/>
    </source>
</evidence>
<keyword id="KW-0071">Autoinducer synthesis</keyword>
<keyword id="KW-0408">Iron</keyword>
<keyword id="KW-0456">Lyase</keyword>
<keyword id="KW-0479">Metal-binding</keyword>
<keyword id="KW-0673">Quorum sensing</keyword>
<proteinExistence type="inferred from homology"/>
<name>LUXS_THET2</name>
<reference key="1">
    <citation type="journal article" date="2004" name="Nat. Biotechnol.">
        <title>The genome sequence of the extreme thermophile Thermus thermophilus.</title>
        <authorList>
            <person name="Henne A."/>
            <person name="Brueggemann H."/>
            <person name="Raasch C."/>
            <person name="Wiezer A."/>
            <person name="Hartsch T."/>
            <person name="Liesegang H."/>
            <person name="Johann A."/>
            <person name="Lienard T."/>
            <person name="Gohl O."/>
            <person name="Martinez-Arias R."/>
            <person name="Jacobi C."/>
            <person name="Starkuviene V."/>
            <person name="Schlenczeck S."/>
            <person name="Dencker S."/>
            <person name="Huber R."/>
            <person name="Klenk H.-P."/>
            <person name="Kramer W."/>
            <person name="Merkl R."/>
            <person name="Gottschalk G."/>
            <person name="Fritz H.-J."/>
        </authorList>
    </citation>
    <scope>NUCLEOTIDE SEQUENCE [LARGE SCALE GENOMIC DNA]</scope>
    <source>
        <strain>ATCC BAA-163 / DSM 7039 / HB27</strain>
    </source>
</reference>
<dbReference type="EC" id="4.4.1.21" evidence="1"/>
<dbReference type="EMBL" id="AE017221">
    <property type="protein sequence ID" value="AAS81528.1"/>
    <property type="molecule type" value="Genomic_DNA"/>
</dbReference>
<dbReference type="RefSeq" id="WP_011173597.1">
    <property type="nucleotide sequence ID" value="NC_005835.1"/>
</dbReference>
<dbReference type="SMR" id="Q72IE6"/>
<dbReference type="GeneID" id="3167928"/>
<dbReference type="KEGG" id="tth:TT_C1186"/>
<dbReference type="eggNOG" id="COG1854">
    <property type="taxonomic scope" value="Bacteria"/>
</dbReference>
<dbReference type="HOGENOM" id="CLU_107531_2_0_0"/>
<dbReference type="OrthoDB" id="9788129at2"/>
<dbReference type="BRENDA" id="4.4.1.21">
    <property type="organism ID" value="2305"/>
</dbReference>
<dbReference type="Proteomes" id="UP000000592">
    <property type="component" value="Chromosome"/>
</dbReference>
<dbReference type="GO" id="GO:0005506">
    <property type="term" value="F:iron ion binding"/>
    <property type="evidence" value="ECO:0007669"/>
    <property type="project" value="InterPro"/>
</dbReference>
<dbReference type="GO" id="GO:0043768">
    <property type="term" value="F:S-ribosylhomocysteine lyase activity"/>
    <property type="evidence" value="ECO:0007669"/>
    <property type="project" value="UniProtKB-UniRule"/>
</dbReference>
<dbReference type="GO" id="GO:0009372">
    <property type="term" value="P:quorum sensing"/>
    <property type="evidence" value="ECO:0007669"/>
    <property type="project" value="UniProtKB-UniRule"/>
</dbReference>
<dbReference type="Gene3D" id="3.30.1360.80">
    <property type="entry name" value="S-ribosylhomocysteinase (LuxS)"/>
    <property type="match status" value="1"/>
</dbReference>
<dbReference type="HAMAP" id="MF_00091">
    <property type="entry name" value="LuxS"/>
    <property type="match status" value="1"/>
</dbReference>
<dbReference type="InterPro" id="IPR037005">
    <property type="entry name" value="LuxS_sf"/>
</dbReference>
<dbReference type="InterPro" id="IPR011249">
    <property type="entry name" value="Metalloenz_LuxS/M16"/>
</dbReference>
<dbReference type="InterPro" id="IPR003815">
    <property type="entry name" value="S-ribosylhomocysteinase"/>
</dbReference>
<dbReference type="NCBIfam" id="NF002604">
    <property type="entry name" value="PRK02260.1-4"/>
    <property type="match status" value="1"/>
</dbReference>
<dbReference type="NCBIfam" id="NF002606">
    <property type="entry name" value="PRK02260.2-4"/>
    <property type="match status" value="1"/>
</dbReference>
<dbReference type="PANTHER" id="PTHR35799">
    <property type="entry name" value="S-RIBOSYLHOMOCYSTEINE LYASE"/>
    <property type="match status" value="1"/>
</dbReference>
<dbReference type="PANTHER" id="PTHR35799:SF1">
    <property type="entry name" value="S-RIBOSYLHOMOCYSTEINE LYASE"/>
    <property type="match status" value="1"/>
</dbReference>
<dbReference type="Pfam" id="PF02664">
    <property type="entry name" value="LuxS"/>
    <property type="match status" value="1"/>
</dbReference>
<dbReference type="PIRSF" id="PIRSF006160">
    <property type="entry name" value="AI2"/>
    <property type="match status" value="1"/>
</dbReference>
<dbReference type="PRINTS" id="PR01487">
    <property type="entry name" value="LUXSPROTEIN"/>
</dbReference>
<dbReference type="SUPFAM" id="SSF63411">
    <property type="entry name" value="LuxS/MPP-like metallohydrolase"/>
    <property type="match status" value="1"/>
</dbReference>
<protein>
    <recommendedName>
        <fullName evidence="1">S-ribosylhomocysteine lyase</fullName>
        <ecNumber evidence="1">4.4.1.21</ecNumber>
    </recommendedName>
    <alternativeName>
        <fullName evidence="1">AI-2 synthesis protein</fullName>
    </alternativeName>
    <alternativeName>
        <fullName evidence="1">Autoinducer-2 production protein LuxS</fullName>
    </alternativeName>
</protein>